<feature type="signal peptide" evidence="3">
    <location>
        <begin position="1"/>
        <end position="20"/>
    </location>
</feature>
<feature type="propeptide" id="PRO_0000404916" evidence="1">
    <location>
        <begin position="21"/>
        <end position="52"/>
    </location>
</feature>
<feature type="peptide" id="PRO_0000404917" description="Conotoxin TsMMSK-021">
    <location>
        <begin position="53"/>
        <end position="68"/>
    </location>
</feature>
<feature type="modified residue" description="4-hydroxyproline" evidence="1">
    <location>
        <position position="64"/>
    </location>
</feature>
<feature type="disulfide bond" evidence="2">
    <location>
        <begin position="53"/>
        <end position="66"/>
    </location>
</feature>
<feature type="disulfide bond" evidence="2">
    <location>
        <begin position="54"/>
        <end position="62"/>
    </location>
</feature>
<feature type="disulfide bond" evidence="2">
    <location>
        <begin position="58"/>
        <end position="65"/>
    </location>
</feature>
<proteinExistence type="evidence at transcript level"/>
<accession>Q9BPK0</accession>
<comment type="subcellular location">
    <subcellularLocation>
        <location evidence="1">Secreted</location>
    </subcellularLocation>
</comment>
<comment type="tissue specificity">
    <text>Expressed by the venom duct.</text>
</comment>
<comment type="domain">
    <text>The cysteine framework is III (CC-C-C-CC). Classified in the M-2 branch, since 2 residues stand between the fourth and the fifth cysteine residues.</text>
</comment>
<comment type="similarity">
    <text evidence="4">Belongs to the conotoxin M superfamily.</text>
</comment>
<sequence>MMSKLGVLLTICLLLFPLTAVRLDGDQHTDRPADRMQDIATEQHPLFDPVKRCCDWPCTIGCVPCCLP</sequence>
<reference key="1">
    <citation type="journal article" date="2001" name="Mol. Biol. Evol.">
        <title>Mechanisms for evolving hypervariability: the case of conopeptides.</title>
        <authorList>
            <person name="Conticello S.G."/>
            <person name="Gilad Y."/>
            <person name="Avidan N."/>
            <person name="Ben-Asher E."/>
            <person name="Levy Z."/>
            <person name="Fainzilber M."/>
        </authorList>
    </citation>
    <scope>NUCLEOTIDE SEQUENCE [MRNA]</scope>
    <source>
        <tissue>Venom duct</tissue>
    </source>
</reference>
<dbReference type="EMBL" id="AF214923">
    <property type="protein sequence ID" value="AAG60351.1"/>
    <property type="molecule type" value="mRNA"/>
</dbReference>
<dbReference type="ConoServer" id="610">
    <property type="toxin name" value="TsMMSK-021 precursor"/>
</dbReference>
<dbReference type="GO" id="GO:0005576">
    <property type="term" value="C:extracellular region"/>
    <property type="evidence" value="ECO:0007669"/>
    <property type="project" value="UniProtKB-SubCell"/>
</dbReference>
<dbReference type="GO" id="GO:0008200">
    <property type="term" value="F:ion channel inhibitor activity"/>
    <property type="evidence" value="ECO:0007669"/>
    <property type="project" value="InterPro"/>
</dbReference>
<dbReference type="GO" id="GO:0090729">
    <property type="term" value="F:toxin activity"/>
    <property type="evidence" value="ECO:0007669"/>
    <property type="project" value="UniProtKB-KW"/>
</dbReference>
<dbReference type="InterPro" id="IPR004214">
    <property type="entry name" value="Conotoxin"/>
</dbReference>
<dbReference type="Pfam" id="PF02950">
    <property type="entry name" value="Conotoxin"/>
    <property type="match status" value="1"/>
</dbReference>
<organism>
    <name type="scientific">Conus tessulatus</name>
    <name type="common">Tessellate cone</name>
    <dbReference type="NCBI Taxonomy" id="101317"/>
    <lineage>
        <taxon>Eukaryota</taxon>
        <taxon>Metazoa</taxon>
        <taxon>Spiralia</taxon>
        <taxon>Lophotrochozoa</taxon>
        <taxon>Mollusca</taxon>
        <taxon>Gastropoda</taxon>
        <taxon>Caenogastropoda</taxon>
        <taxon>Neogastropoda</taxon>
        <taxon>Conoidea</taxon>
        <taxon>Conidae</taxon>
        <taxon>Conus</taxon>
        <taxon>Tesselliconus</taxon>
    </lineage>
</organism>
<keyword id="KW-0165">Cleavage on pair of basic residues</keyword>
<keyword id="KW-1015">Disulfide bond</keyword>
<keyword id="KW-0379">Hydroxylation</keyword>
<keyword id="KW-0528">Neurotoxin</keyword>
<keyword id="KW-0964">Secreted</keyword>
<keyword id="KW-0732">Signal</keyword>
<keyword id="KW-0800">Toxin</keyword>
<evidence type="ECO:0000250" key="1"/>
<evidence type="ECO:0000250" key="2">
    <source>
        <dbReference type="UniProtKB" id="P0CI24"/>
    </source>
</evidence>
<evidence type="ECO:0000255" key="3"/>
<evidence type="ECO:0000305" key="4"/>
<protein>
    <recommendedName>
        <fullName>Conotoxin TsMMSK-021</fullName>
    </recommendedName>
</protein>
<name>M23L_CONTS</name>